<proteinExistence type="inferred from homology"/>
<keyword id="KW-0004">4Fe-4S</keyword>
<keyword id="KW-0408">Iron</keyword>
<keyword id="KW-0411">Iron-sulfur</keyword>
<keyword id="KW-0479">Metal-binding</keyword>
<keyword id="KW-0489">Methyltransferase</keyword>
<keyword id="KW-0949">S-adenosyl-L-methionine</keyword>
<keyword id="KW-0808">Transferase</keyword>
<sequence>MIQKQHESKLEVGQTFPVTIKRLGINGEGVGYFKRQVVFIPGALPGEEVVAETTKIQRGFAEAKVKKVRKASPHRVKAPCPVYEECGGCQLQHLDYKEQLNQKRDIVVQAFQKYMNNGLEEKIRPTLGMENPWHYRNKSQLQVGRKDEKVITGLYKQNSHQLIDIAHCMIQHKATNEATKVVRRILEKLNVSIYNEKKQKGLVRTIVTRTAVQTGEVQVTLITTKEELPNKEQFIAEVQKQMPAVKSIMQNVNWRKTSVIFGDKTFKLAGKEVIQETLGDLSFELSARAFFQLNPEQTVVLYNEAKKAAALTGNEKIVDAYCGVGTIGLWLANDAAEVRGMDVIPEAIADARKNAKRHGFTNTKYEAGKAEQWLPKWVKEGWRPDVIVVDPPRTGCDDKLLETILKVKPKQVVYVSCNPSSLARDVQALMKSYEVEYVQPVDMFPHTAHVENVVKLVRK</sequence>
<protein>
    <recommendedName>
        <fullName>Uncharacterized RNA methyltransferase BCE_0542</fullName>
        <ecNumber>2.1.1.-</ecNumber>
    </recommendedName>
</protein>
<dbReference type="EC" id="2.1.1.-"/>
<dbReference type="EMBL" id="AE017194">
    <property type="protein sequence ID" value="AAS39477.1"/>
    <property type="molecule type" value="Genomic_DNA"/>
</dbReference>
<dbReference type="SMR" id="Q73E18"/>
<dbReference type="KEGG" id="bca:BCE_0542"/>
<dbReference type="HOGENOM" id="CLU_014689_7_1_9"/>
<dbReference type="Proteomes" id="UP000002527">
    <property type="component" value="Chromosome"/>
</dbReference>
<dbReference type="GO" id="GO:0051539">
    <property type="term" value="F:4 iron, 4 sulfur cluster binding"/>
    <property type="evidence" value="ECO:0007669"/>
    <property type="project" value="UniProtKB-KW"/>
</dbReference>
<dbReference type="GO" id="GO:0046872">
    <property type="term" value="F:metal ion binding"/>
    <property type="evidence" value="ECO:0007669"/>
    <property type="project" value="UniProtKB-KW"/>
</dbReference>
<dbReference type="GO" id="GO:0070041">
    <property type="term" value="F:rRNA (uridine-C5-)-methyltransferase activity"/>
    <property type="evidence" value="ECO:0007669"/>
    <property type="project" value="TreeGrafter"/>
</dbReference>
<dbReference type="GO" id="GO:0070475">
    <property type="term" value="P:rRNA base methylation"/>
    <property type="evidence" value="ECO:0007669"/>
    <property type="project" value="TreeGrafter"/>
</dbReference>
<dbReference type="CDD" id="cd02440">
    <property type="entry name" value="AdoMet_MTases"/>
    <property type="match status" value="1"/>
</dbReference>
<dbReference type="FunFam" id="3.40.50.150:FF:000009">
    <property type="entry name" value="23S rRNA (Uracil(1939)-C(5))-methyltransferase RlmD"/>
    <property type="match status" value="1"/>
</dbReference>
<dbReference type="FunFam" id="2.40.50.140:FF:000097">
    <property type="entry name" value="23S rRNA (uracil(1939)-C(5))-methyltransferase RlmD"/>
    <property type="match status" value="1"/>
</dbReference>
<dbReference type="FunFam" id="2.40.50.1070:FF:000003">
    <property type="entry name" value="23S rRNA (Uracil-5-)-methyltransferase RumA"/>
    <property type="match status" value="1"/>
</dbReference>
<dbReference type="Gene3D" id="2.40.50.1070">
    <property type="match status" value="1"/>
</dbReference>
<dbReference type="Gene3D" id="2.40.50.140">
    <property type="entry name" value="Nucleic acid-binding proteins"/>
    <property type="match status" value="1"/>
</dbReference>
<dbReference type="Gene3D" id="3.40.50.150">
    <property type="entry name" value="Vaccinia Virus protein VP39"/>
    <property type="match status" value="1"/>
</dbReference>
<dbReference type="InterPro" id="IPR030390">
    <property type="entry name" value="MeTrfase_TrmA_AS"/>
</dbReference>
<dbReference type="InterPro" id="IPR030391">
    <property type="entry name" value="MeTrfase_TrmA_CS"/>
</dbReference>
<dbReference type="InterPro" id="IPR012340">
    <property type="entry name" value="NA-bd_OB-fold"/>
</dbReference>
<dbReference type="InterPro" id="IPR029063">
    <property type="entry name" value="SAM-dependent_MTases_sf"/>
</dbReference>
<dbReference type="InterPro" id="IPR002792">
    <property type="entry name" value="TRAM_dom"/>
</dbReference>
<dbReference type="InterPro" id="IPR010280">
    <property type="entry name" value="U5_MeTrfase_fam"/>
</dbReference>
<dbReference type="NCBIfam" id="TIGR00479">
    <property type="entry name" value="rumA"/>
    <property type="match status" value="1"/>
</dbReference>
<dbReference type="PANTHER" id="PTHR11061:SF45">
    <property type="match status" value="1"/>
</dbReference>
<dbReference type="PANTHER" id="PTHR11061">
    <property type="entry name" value="RNA M5U METHYLTRANSFERASE"/>
    <property type="match status" value="1"/>
</dbReference>
<dbReference type="Pfam" id="PF01938">
    <property type="entry name" value="TRAM"/>
    <property type="match status" value="1"/>
</dbReference>
<dbReference type="Pfam" id="PF05958">
    <property type="entry name" value="tRNA_U5-meth_tr"/>
    <property type="match status" value="1"/>
</dbReference>
<dbReference type="SUPFAM" id="SSF50249">
    <property type="entry name" value="Nucleic acid-binding proteins"/>
    <property type="match status" value="1"/>
</dbReference>
<dbReference type="SUPFAM" id="SSF53335">
    <property type="entry name" value="S-adenosyl-L-methionine-dependent methyltransferases"/>
    <property type="match status" value="1"/>
</dbReference>
<dbReference type="PROSITE" id="PS51687">
    <property type="entry name" value="SAM_MT_RNA_M5U"/>
    <property type="match status" value="1"/>
</dbReference>
<dbReference type="PROSITE" id="PS50926">
    <property type="entry name" value="TRAM"/>
    <property type="match status" value="1"/>
</dbReference>
<dbReference type="PROSITE" id="PS01230">
    <property type="entry name" value="TRMA_1"/>
    <property type="match status" value="1"/>
</dbReference>
<dbReference type="PROSITE" id="PS01231">
    <property type="entry name" value="TRMA_2"/>
    <property type="match status" value="1"/>
</dbReference>
<comment type="similarity">
    <text evidence="3">Belongs to the class I-like SAM-binding methyltransferase superfamily. RNA M5U methyltransferase family.</text>
</comment>
<name>Y542_BACC1</name>
<evidence type="ECO:0000250" key="1"/>
<evidence type="ECO:0000255" key="2">
    <source>
        <dbReference type="PROSITE-ProRule" id="PRU00208"/>
    </source>
</evidence>
<evidence type="ECO:0000255" key="3">
    <source>
        <dbReference type="PROSITE-ProRule" id="PRU01024"/>
    </source>
</evidence>
<organism>
    <name type="scientific">Bacillus cereus (strain ATCC 10987 / NRS 248)</name>
    <dbReference type="NCBI Taxonomy" id="222523"/>
    <lineage>
        <taxon>Bacteria</taxon>
        <taxon>Bacillati</taxon>
        <taxon>Bacillota</taxon>
        <taxon>Bacilli</taxon>
        <taxon>Bacillales</taxon>
        <taxon>Bacillaceae</taxon>
        <taxon>Bacillus</taxon>
        <taxon>Bacillus cereus group</taxon>
    </lineage>
</organism>
<reference key="1">
    <citation type="journal article" date="2004" name="Nucleic Acids Res.">
        <title>The genome sequence of Bacillus cereus ATCC 10987 reveals metabolic adaptations and a large plasmid related to Bacillus anthracis pXO1.</title>
        <authorList>
            <person name="Rasko D.A."/>
            <person name="Ravel J."/>
            <person name="Oekstad O.A."/>
            <person name="Helgason E."/>
            <person name="Cer R.Z."/>
            <person name="Jiang L."/>
            <person name="Shores K.A."/>
            <person name="Fouts D.E."/>
            <person name="Tourasse N.J."/>
            <person name="Angiuoli S.V."/>
            <person name="Kolonay J.F."/>
            <person name="Nelson W.C."/>
            <person name="Kolstoe A.-B."/>
            <person name="Fraser C.M."/>
            <person name="Read T.D."/>
        </authorList>
    </citation>
    <scope>NUCLEOTIDE SEQUENCE [LARGE SCALE GENOMIC DNA]</scope>
    <source>
        <strain>ATCC 10987 / NRS 248</strain>
    </source>
</reference>
<accession>Q73E18</accession>
<gene>
    <name type="ordered locus">BCE_0542</name>
</gene>
<feature type="chain" id="PRO_0000161949" description="Uncharacterized RNA methyltransferase BCE_0542">
    <location>
        <begin position="1"/>
        <end position="459"/>
    </location>
</feature>
<feature type="domain" description="TRAM" evidence="2">
    <location>
        <begin position="9"/>
        <end position="67"/>
    </location>
</feature>
<feature type="active site" description="Nucleophile" evidence="3">
    <location>
        <position position="417"/>
    </location>
</feature>
<feature type="binding site" evidence="1">
    <location>
        <position position="80"/>
    </location>
    <ligand>
        <name>[4Fe-4S] cluster</name>
        <dbReference type="ChEBI" id="CHEBI:49883"/>
    </ligand>
</feature>
<feature type="binding site" evidence="1">
    <location>
        <position position="86"/>
    </location>
    <ligand>
        <name>[4Fe-4S] cluster</name>
        <dbReference type="ChEBI" id="CHEBI:49883"/>
    </ligand>
</feature>
<feature type="binding site" evidence="1">
    <location>
        <position position="89"/>
    </location>
    <ligand>
        <name>[4Fe-4S] cluster</name>
        <dbReference type="ChEBI" id="CHEBI:49883"/>
    </ligand>
</feature>
<feature type="binding site" evidence="1">
    <location>
        <position position="168"/>
    </location>
    <ligand>
        <name>[4Fe-4S] cluster</name>
        <dbReference type="ChEBI" id="CHEBI:49883"/>
    </ligand>
</feature>
<feature type="binding site" evidence="3">
    <location>
        <position position="292"/>
    </location>
    <ligand>
        <name>S-adenosyl-L-methionine</name>
        <dbReference type="ChEBI" id="CHEBI:59789"/>
    </ligand>
</feature>
<feature type="binding site" evidence="3">
    <location>
        <position position="321"/>
    </location>
    <ligand>
        <name>S-adenosyl-L-methionine</name>
        <dbReference type="ChEBI" id="CHEBI:59789"/>
    </ligand>
</feature>
<feature type="binding site" evidence="3">
    <location>
        <position position="342"/>
    </location>
    <ligand>
        <name>S-adenosyl-L-methionine</name>
        <dbReference type="ChEBI" id="CHEBI:59789"/>
    </ligand>
</feature>
<feature type="binding site" evidence="3">
    <location>
        <position position="390"/>
    </location>
    <ligand>
        <name>S-adenosyl-L-methionine</name>
        <dbReference type="ChEBI" id="CHEBI:59789"/>
    </ligand>
</feature>